<name>UVRC_HISS2</name>
<sequence>MFDAKNFLANVTHQPGVYRMFDEKGQVIYVGKAKDLKKRLSSYFRTNLNSKKTSALVSHIHSIETTITASETEALLLEHNYIKAFQPRYNVLLRDDKSYPYILLTKERHPRITSHRGSKKVQGEYFGPYPHAGAVRETLSLLQKLFPIRQCENSVYNNRSRPCLQYQIGRCSGPCIDGLVSDEEYQQQVDFARLFLQGKDQQVLEHLIKKMEQASMQLNFEQAAYFRDQIQAIRAVIEKQFVSNERLDDMDILAIAYQLGIACVQVLFIRQGKVLGNRSYFPKVPANTDLSELTETFVGQFYLQGHQGRIIPSTIIVDHVLNEKHELEVLLTEQAGRKVNIQDNVKGNKSKFLHLAQMNAQAALVTQLKQANLIQERYQALQELLSLTTIKRMECFDISHTMGEQTIASCVVFDTEGPLKSDYRRFNISGITAGDDYAAMEQALLKRYDRPLENEKIPDIIFIDGGKGQLNRALQVFAQLNVSWDKNKPLLIGVAKGVDRKAGLETLIISKQNKEVNLLPDSLALHLIQHIRDESHYHAIGGHRKKRQQAFTQSGLEAIKGVGAKRRQALLKYLGGMQGVKNATLAEISSVPGISAALAERIYETLRSE</sequence>
<keyword id="KW-0963">Cytoplasm</keyword>
<keyword id="KW-0227">DNA damage</keyword>
<keyword id="KW-0228">DNA excision</keyword>
<keyword id="KW-0234">DNA repair</keyword>
<keyword id="KW-0267">Excision nuclease</keyword>
<keyword id="KW-0742">SOS response</keyword>
<evidence type="ECO:0000255" key="1">
    <source>
        <dbReference type="HAMAP-Rule" id="MF_00203"/>
    </source>
</evidence>
<accession>B0UT80</accession>
<comment type="function">
    <text evidence="1">The UvrABC repair system catalyzes the recognition and processing of DNA lesions. UvrC both incises the 5' and 3' sides of the lesion. The N-terminal half is responsible for the 3' incision and the C-terminal half is responsible for the 5' incision.</text>
</comment>
<comment type="subunit">
    <text evidence="1">Interacts with UvrB in an incision complex.</text>
</comment>
<comment type="subcellular location">
    <subcellularLocation>
        <location evidence="1">Cytoplasm</location>
    </subcellularLocation>
</comment>
<comment type="similarity">
    <text evidence="1">Belongs to the UvrC family.</text>
</comment>
<feature type="chain" id="PRO_1000077793" description="UvrABC system protein C">
    <location>
        <begin position="1"/>
        <end position="609"/>
    </location>
</feature>
<feature type="domain" description="GIY-YIG" evidence="1">
    <location>
        <begin position="13"/>
        <end position="91"/>
    </location>
</feature>
<feature type="domain" description="UVR" evidence="1">
    <location>
        <begin position="201"/>
        <end position="236"/>
    </location>
</feature>
<proteinExistence type="inferred from homology"/>
<dbReference type="EMBL" id="CP000947">
    <property type="protein sequence ID" value="ACA32686.1"/>
    <property type="molecule type" value="Genomic_DNA"/>
</dbReference>
<dbReference type="RefSeq" id="WP_012341797.1">
    <property type="nucleotide sequence ID" value="NC_010519.1"/>
</dbReference>
<dbReference type="SMR" id="B0UT80"/>
<dbReference type="STRING" id="228400.HSM_0999"/>
<dbReference type="GeneID" id="31487297"/>
<dbReference type="KEGG" id="hsm:HSM_0999"/>
<dbReference type="HOGENOM" id="CLU_014841_3_2_6"/>
<dbReference type="GO" id="GO:0005737">
    <property type="term" value="C:cytoplasm"/>
    <property type="evidence" value="ECO:0007669"/>
    <property type="project" value="UniProtKB-SubCell"/>
</dbReference>
<dbReference type="GO" id="GO:0009380">
    <property type="term" value="C:excinuclease repair complex"/>
    <property type="evidence" value="ECO:0007669"/>
    <property type="project" value="InterPro"/>
</dbReference>
<dbReference type="GO" id="GO:0003677">
    <property type="term" value="F:DNA binding"/>
    <property type="evidence" value="ECO:0007669"/>
    <property type="project" value="UniProtKB-UniRule"/>
</dbReference>
<dbReference type="GO" id="GO:0009381">
    <property type="term" value="F:excinuclease ABC activity"/>
    <property type="evidence" value="ECO:0007669"/>
    <property type="project" value="UniProtKB-UniRule"/>
</dbReference>
<dbReference type="GO" id="GO:0006289">
    <property type="term" value="P:nucleotide-excision repair"/>
    <property type="evidence" value="ECO:0007669"/>
    <property type="project" value="UniProtKB-UniRule"/>
</dbReference>
<dbReference type="GO" id="GO:0009432">
    <property type="term" value="P:SOS response"/>
    <property type="evidence" value="ECO:0007669"/>
    <property type="project" value="UniProtKB-UniRule"/>
</dbReference>
<dbReference type="CDD" id="cd10434">
    <property type="entry name" value="GIY-YIG_UvrC_Cho"/>
    <property type="match status" value="1"/>
</dbReference>
<dbReference type="FunFam" id="1.10.150.20:FF:000005">
    <property type="entry name" value="UvrABC system protein C"/>
    <property type="match status" value="1"/>
</dbReference>
<dbReference type="FunFam" id="3.30.420.340:FF:000001">
    <property type="entry name" value="UvrABC system protein C"/>
    <property type="match status" value="1"/>
</dbReference>
<dbReference type="FunFam" id="3.40.1440.10:FF:000001">
    <property type="entry name" value="UvrABC system protein C"/>
    <property type="match status" value="1"/>
</dbReference>
<dbReference type="FunFam" id="4.10.860.10:FF:000002">
    <property type="entry name" value="UvrABC system protein C"/>
    <property type="match status" value="1"/>
</dbReference>
<dbReference type="Gene3D" id="1.10.150.20">
    <property type="entry name" value="5' to 3' exonuclease, C-terminal subdomain"/>
    <property type="match status" value="1"/>
</dbReference>
<dbReference type="Gene3D" id="3.40.1440.10">
    <property type="entry name" value="GIY-YIG endonuclease"/>
    <property type="match status" value="1"/>
</dbReference>
<dbReference type="Gene3D" id="4.10.860.10">
    <property type="entry name" value="UVR domain"/>
    <property type="match status" value="1"/>
</dbReference>
<dbReference type="Gene3D" id="3.30.420.340">
    <property type="entry name" value="UvrC, RNAse H endonuclease domain"/>
    <property type="match status" value="1"/>
</dbReference>
<dbReference type="HAMAP" id="MF_00203">
    <property type="entry name" value="UvrC"/>
    <property type="match status" value="1"/>
</dbReference>
<dbReference type="InterPro" id="IPR000305">
    <property type="entry name" value="GIY-YIG_endonuc"/>
</dbReference>
<dbReference type="InterPro" id="IPR035901">
    <property type="entry name" value="GIY-YIG_endonuc_sf"/>
</dbReference>
<dbReference type="InterPro" id="IPR047296">
    <property type="entry name" value="GIY-YIG_UvrC_Cho"/>
</dbReference>
<dbReference type="InterPro" id="IPR003583">
    <property type="entry name" value="Hlx-hairpin-Hlx_DNA-bd_motif"/>
</dbReference>
<dbReference type="InterPro" id="IPR010994">
    <property type="entry name" value="RuvA_2-like"/>
</dbReference>
<dbReference type="InterPro" id="IPR001943">
    <property type="entry name" value="UVR_dom"/>
</dbReference>
<dbReference type="InterPro" id="IPR036876">
    <property type="entry name" value="UVR_dom_sf"/>
</dbReference>
<dbReference type="InterPro" id="IPR050066">
    <property type="entry name" value="UvrABC_protein_C"/>
</dbReference>
<dbReference type="InterPro" id="IPR004791">
    <property type="entry name" value="UvrC"/>
</dbReference>
<dbReference type="InterPro" id="IPR001162">
    <property type="entry name" value="UvrC_RNase_H_dom"/>
</dbReference>
<dbReference type="InterPro" id="IPR038476">
    <property type="entry name" value="UvrC_RNase_H_dom_sf"/>
</dbReference>
<dbReference type="NCBIfam" id="NF001824">
    <property type="entry name" value="PRK00558.1-5"/>
    <property type="match status" value="1"/>
</dbReference>
<dbReference type="NCBIfam" id="TIGR00194">
    <property type="entry name" value="uvrC"/>
    <property type="match status" value="1"/>
</dbReference>
<dbReference type="PANTHER" id="PTHR30562:SF1">
    <property type="entry name" value="UVRABC SYSTEM PROTEIN C"/>
    <property type="match status" value="1"/>
</dbReference>
<dbReference type="PANTHER" id="PTHR30562">
    <property type="entry name" value="UVRC/OXIDOREDUCTASE"/>
    <property type="match status" value="1"/>
</dbReference>
<dbReference type="Pfam" id="PF01541">
    <property type="entry name" value="GIY-YIG"/>
    <property type="match status" value="1"/>
</dbReference>
<dbReference type="Pfam" id="PF14520">
    <property type="entry name" value="HHH_5"/>
    <property type="match status" value="1"/>
</dbReference>
<dbReference type="Pfam" id="PF02151">
    <property type="entry name" value="UVR"/>
    <property type="match status" value="1"/>
</dbReference>
<dbReference type="Pfam" id="PF22920">
    <property type="entry name" value="UvrC_RNaseH"/>
    <property type="match status" value="1"/>
</dbReference>
<dbReference type="Pfam" id="PF08459">
    <property type="entry name" value="UvrC_RNaseH_dom"/>
    <property type="match status" value="1"/>
</dbReference>
<dbReference type="SMART" id="SM00465">
    <property type="entry name" value="GIYc"/>
    <property type="match status" value="1"/>
</dbReference>
<dbReference type="SMART" id="SM00278">
    <property type="entry name" value="HhH1"/>
    <property type="match status" value="2"/>
</dbReference>
<dbReference type="SUPFAM" id="SSF46600">
    <property type="entry name" value="C-terminal UvrC-binding domain of UvrB"/>
    <property type="match status" value="1"/>
</dbReference>
<dbReference type="SUPFAM" id="SSF82771">
    <property type="entry name" value="GIY-YIG endonuclease"/>
    <property type="match status" value="1"/>
</dbReference>
<dbReference type="SUPFAM" id="SSF47781">
    <property type="entry name" value="RuvA domain 2-like"/>
    <property type="match status" value="1"/>
</dbReference>
<dbReference type="PROSITE" id="PS50164">
    <property type="entry name" value="GIY_YIG"/>
    <property type="match status" value="1"/>
</dbReference>
<dbReference type="PROSITE" id="PS50151">
    <property type="entry name" value="UVR"/>
    <property type="match status" value="1"/>
</dbReference>
<dbReference type="PROSITE" id="PS50165">
    <property type="entry name" value="UVRC"/>
    <property type="match status" value="1"/>
</dbReference>
<organism>
    <name type="scientific">Histophilus somni (strain 2336)</name>
    <name type="common">Haemophilus somnus</name>
    <dbReference type="NCBI Taxonomy" id="228400"/>
    <lineage>
        <taxon>Bacteria</taxon>
        <taxon>Pseudomonadati</taxon>
        <taxon>Pseudomonadota</taxon>
        <taxon>Gammaproteobacteria</taxon>
        <taxon>Pasteurellales</taxon>
        <taxon>Pasteurellaceae</taxon>
        <taxon>Histophilus</taxon>
    </lineage>
</organism>
<protein>
    <recommendedName>
        <fullName evidence="1">UvrABC system protein C</fullName>
        <shortName evidence="1">Protein UvrC</shortName>
    </recommendedName>
    <alternativeName>
        <fullName evidence="1">Excinuclease ABC subunit C</fullName>
    </alternativeName>
</protein>
<gene>
    <name evidence="1" type="primary">uvrC</name>
    <name type="ordered locus">HSM_0999</name>
</gene>
<reference key="1">
    <citation type="submission" date="2008-02" db="EMBL/GenBank/DDBJ databases">
        <title>Complete sequence of Haemophilus somnus 2336.</title>
        <authorList>
            <consortium name="US DOE Joint Genome Institute"/>
            <person name="Siddaramappa S."/>
            <person name="Duncan A.J."/>
            <person name="Challacombe J.F."/>
            <person name="Rainey D."/>
            <person name="Gillaspy A.F."/>
            <person name="Carson M."/>
            <person name="Gipson J."/>
            <person name="Gipson M."/>
            <person name="Bruce D."/>
            <person name="Detter J.C."/>
            <person name="Han C.S."/>
            <person name="Land M."/>
            <person name="Tapia R."/>
            <person name="Thompson L.S."/>
            <person name="Orvis J."/>
            <person name="Zaitshik J."/>
            <person name="Barnes G."/>
            <person name="Brettin T.S."/>
            <person name="Dyer D.W."/>
            <person name="Inzana T.J."/>
        </authorList>
    </citation>
    <scope>NUCLEOTIDE SEQUENCE [LARGE SCALE GENOMIC DNA]</scope>
    <source>
        <strain>2336</strain>
    </source>
</reference>